<comment type="function">
    <text evidence="1">Catalyzes the irreversible NADPH-dependent deamination of GMP to IMP. It functions in the conversion of nucleobase, nucleoside and nucleotide derivatives of G to A nucleotides, and in maintaining the intracellular balance of A and G nucleotides.</text>
</comment>
<comment type="catalytic activity">
    <reaction evidence="1">
        <text>IMP + NH4(+) + NADP(+) = GMP + NADPH + 2 H(+)</text>
        <dbReference type="Rhea" id="RHEA:17185"/>
        <dbReference type="ChEBI" id="CHEBI:15378"/>
        <dbReference type="ChEBI" id="CHEBI:28938"/>
        <dbReference type="ChEBI" id="CHEBI:57783"/>
        <dbReference type="ChEBI" id="CHEBI:58053"/>
        <dbReference type="ChEBI" id="CHEBI:58115"/>
        <dbReference type="ChEBI" id="CHEBI:58349"/>
        <dbReference type="EC" id="1.7.1.7"/>
    </reaction>
</comment>
<comment type="subunit">
    <text evidence="1">Homotetramer.</text>
</comment>
<comment type="similarity">
    <text evidence="1">Belongs to the IMPDH/GMPR family. GuaC type 1 subfamily.</text>
</comment>
<gene>
    <name evidence="1" type="primary">guaC</name>
    <name type="ordered locus">AHA_3225</name>
</gene>
<evidence type="ECO:0000255" key="1">
    <source>
        <dbReference type="HAMAP-Rule" id="MF_00596"/>
    </source>
</evidence>
<sequence length="347" mass="37497">MRIEEDLKLGFKDVLFRPKRSTLKSRSQVSLTRQFTFKHTQTQWQGVPVIAANMDTVGSFAMARTLASFEMMTAVHKHYSLAQWQTFVSETDPALLGHVMVSTGTSEDDFTKTRQILAMSSALRFICVDVANGYSQHFVEFLRKIREACPNHVILAGNVVTGEMVEELILSGADIVKVGIGPGSVCTTRVKTGVGYPQLSAIIECADAAHGLGGQIVGDGGCTCPGDVAKAFGGGADFVMLGGMLAAHEECGGEIVDVDGEPFMKFYGMSSSSAMDKHAGGVAEYRASEGKTVLLPYRGPVENTVRDILGGVRSTCTYVGASQLKELTKRTTFIRVREQENNVYGKE</sequence>
<dbReference type="EC" id="1.7.1.7" evidence="1"/>
<dbReference type="EMBL" id="CP000462">
    <property type="protein sequence ID" value="ABK39007.1"/>
    <property type="molecule type" value="Genomic_DNA"/>
</dbReference>
<dbReference type="RefSeq" id="WP_011707000.1">
    <property type="nucleotide sequence ID" value="NC_008570.1"/>
</dbReference>
<dbReference type="RefSeq" id="YP_857716.1">
    <property type="nucleotide sequence ID" value="NC_008570.1"/>
</dbReference>
<dbReference type="SMR" id="A0KN65"/>
<dbReference type="STRING" id="380703.AHA_3225"/>
<dbReference type="EnsemblBacteria" id="ABK39007">
    <property type="protein sequence ID" value="ABK39007"/>
    <property type="gene ID" value="AHA_3225"/>
</dbReference>
<dbReference type="GeneID" id="4490585"/>
<dbReference type="KEGG" id="aha:AHA_3225"/>
<dbReference type="PATRIC" id="fig|380703.7.peg.3220"/>
<dbReference type="eggNOG" id="COG0516">
    <property type="taxonomic scope" value="Bacteria"/>
</dbReference>
<dbReference type="HOGENOM" id="CLU_022552_5_3_6"/>
<dbReference type="OrthoDB" id="9805398at2"/>
<dbReference type="Proteomes" id="UP000000756">
    <property type="component" value="Chromosome"/>
</dbReference>
<dbReference type="GO" id="GO:0005829">
    <property type="term" value="C:cytosol"/>
    <property type="evidence" value="ECO:0007669"/>
    <property type="project" value="TreeGrafter"/>
</dbReference>
<dbReference type="GO" id="GO:1902560">
    <property type="term" value="C:GMP reductase complex"/>
    <property type="evidence" value="ECO:0007669"/>
    <property type="project" value="InterPro"/>
</dbReference>
<dbReference type="GO" id="GO:0003920">
    <property type="term" value="F:GMP reductase activity"/>
    <property type="evidence" value="ECO:0007669"/>
    <property type="project" value="UniProtKB-UniRule"/>
</dbReference>
<dbReference type="GO" id="GO:0046872">
    <property type="term" value="F:metal ion binding"/>
    <property type="evidence" value="ECO:0007669"/>
    <property type="project" value="UniProtKB-KW"/>
</dbReference>
<dbReference type="GO" id="GO:0006163">
    <property type="term" value="P:purine nucleotide metabolic process"/>
    <property type="evidence" value="ECO:0007669"/>
    <property type="project" value="UniProtKB-UniRule"/>
</dbReference>
<dbReference type="CDD" id="cd00381">
    <property type="entry name" value="IMPDH"/>
    <property type="match status" value="1"/>
</dbReference>
<dbReference type="FunFam" id="3.20.20.70:FF:000012">
    <property type="entry name" value="GMP reductase"/>
    <property type="match status" value="1"/>
</dbReference>
<dbReference type="Gene3D" id="3.20.20.70">
    <property type="entry name" value="Aldolase class I"/>
    <property type="match status" value="1"/>
</dbReference>
<dbReference type="HAMAP" id="MF_00596">
    <property type="entry name" value="GMP_reduct_type1"/>
    <property type="match status" value="1"/>
</dbReference>
<dbReference type="InterPro" id="IPR013785">
    <property type="entry name" value="Aldolase_TIM"/>
</dbReference>
<dbReference type="InterPro" id="IPR050139">
    <property type="entry name" value="GMP_reductase"/>
</dbReference>
<dbReference type="InterPro" id="IPR005993">
    <property type="entry name" value="GMPR"/>
</dbReference>
<dbReference type="InterPro" id="IPR015875">
    <property type="entry name" value="IMP_DH/GMP_Rdtase_CS"/>
</dbReference>
<dbReference type="InterPro" id="IPR001093">
    <property type="entry name" value="IMP_DH_GMPRt"/>
</dbReference>
<dbReference type="NCBIfam" id="TIGR01305">
    <property type="entry name" value="GMP_reduct_1"/>
    <property type="match status" value="1"/>
</dbReference>
<dbReference type="NCBIfam" id="NF003470">
    <property type="entry name" value="PRK05096.1"/>
    <property type="match status" value="1"/>
</dbReference>
<dbReference type="PANTHER" id="PTHR43170">
    <property type="entry name" value="GMP REDUCTASE"/>
    <property type="match status" value="1"/>
</dbReference>
<dbReference type="PANTHER" id="PTHR43170:SF5">
    <property type="entry name" value="GMP REDUCTASE"/>
    <property type="match status" value="1"/>
</dbReference>
<dbReference type="Pfam" id="PF00478">
    <property type="entry name" value="IMPDH"/>
    <property type="match status" value="1"/>
</dbReference>
<dbReference type="PIRSF" id="PIRSF000235">
    <property type="entry name" value="GMP_reductase"/>
    <property type="match status" value="1"/>
</dbReference>
<dbReference type="SMART" id="SM01240">
    <property type="entry name" value="IMPDH"/>
    <property type="match status" value="1"/>
</dbReference>
<dbReference type="SUPFAM" id="SSF51412">
    <property type="entry name" value="Inosine monophosphate dehydrogenase (IMPDH)"/>
    <property type="match status" value="1"/>
</dbReference>
<dbReference type="PROSITE" id="PS00487">
    <property type="entry name" value="IMP_DH_GMP_RED"/>
    <property type="match status" value="1"/>
</dbReference>
<proteinExistence type="inferred from homology"/>
<keyword id="KW-0479">Metal-binding</keyword>
<keyword id="KW-0521">NADP</keyword>
<keyword id="KW-0560">Oxidoreductase</keyword>
<keyword id="KW-0630">Potassium</keyword>
<keyword id="KW-1185">Reference proteome</keyword>
<feature type="chain" id="PRO_1000025608" description="GMP reductase">
    <location>
        <begin position="1"/>
        <end position="347"/>
    </location>
</feature>
<feature type="active site" description="Thioimidate intermediate" evidence="1">
    <location>
        <position position="186"/>
    </location>
</feature>
<feature type="binding site" evidence="1">
    <location>
        <begin position="108"/>
        <end position="131"/>
    </location>
    <ligand>
        <name>NADP(+)</name>
        <dbReference type="ChEBI" id="CHEBI:58349"/>
    </ligand>
</feature>
<feature type="binding site" evidence="1">
    <location>
        <position position="181"/>
    </location>
    <ligand>
        <name>K(+)</name>
        <dbReference type="ChEBI" id="CHEBI:29103"/>
    </ligand>
</feature>
<feature type="binding site" evidence="1">
    <location>
        <position position="183"/>
    </location>
    <ligand>
        <name>K(+)</name>
        <dbReference type="ChEBI" id="CHEBI:29103"/>
    </ligand>
</feature>
<feature type="binding site" evidence="1">
    <location>
        <begin position="216"/>
        <end position="239"/>
    </location>
    <ligand>
        <name>NADP(+)</name>
        <dbReference type="ChEBI" id="CHEBI:58349"/>
    </ligand>
</feature>
<organism>
    <name type="scientific">Aeromonas hydrophila subsp. hydrophila (strain ATCC 7966 / DSM 30187 / BCRC 13018 / CCUG 14551 / JCM 1027 / KCTC 2358 / NCIMB 9240 / NCTC 8049)</name>
    <dbReference type="NCBI Taxonomy" id="380703"/>
    <lineage>
        <taxon>Bacteria</taxon>
        <taxon>Pseudomonadati</taxon>
        <taxon>Pseudomonadota</taxon>
        <taxon>Gammaproteobacteria</taxon>
        <taxon>Aeromonadales</taxon>
        <taxon>Aeromonadaceae</taxon>
        <taxon>Aeromonas</taxon>
    </lineage>
</organism>
<protein>
    <recommendedName>
        <fullName evidence="1">GMP reductase</fullName>
        <ecNumber evidence="1">1.7.1.7</ecNumber>
    </recommendedName>
    <alternativeName>
        <fullName evidence="1">Guanosine 5'-monophosphate oxidoreductase</fullName>
        <shortName evidence="1">Guanosine monophosphate reductase</shortName>
    </alternativeName>
</protein>
<reference key="1">
    <citation type="journal article" date="2006" name="J. Bacteriol.">
        <title>Genome sequence of Aeromonas hydrophila ATCC 7966T: jack of all trades.</title>
        <authorList>
            <person name="Seshadri R."/>
            <person name="Joseph S.W."/>
            <person name="Chopra A.K."/>
            <person name="Sha J."/>
            <person name="Shaw J."/>
            <person name="Graf J."/>
            <person name="Haft D.H."/>
            <person name="Wu M."/>
            <person name="Ren Q."/>
            <person name="Rosovitz M.J."/>
            <person name="Madupu R."/>
            <person name="Tallon L."/>
            <person name="Kim M."/>
            <person name="Jin S."/>
            <person name="Vuong H."/>
            <person name="Stine O.C."/>
            <person name="Ali A."/>
            <person name="Horneman A.J."/>
            <person name="Heidelberg J.F."/>
        </authorList>
    </citation>
    <scope>NUCLEOTIDE SEQUENCE [LARGE SCALE GENOMIC DNA]</scope>
    <source>
        <strain>ATCC 7966 / DSM 30187 / BCRC 13018 / CCUG 14551 / JCM 1027 / KCTC 2358 / NCIMB 9240 / NCTC 8049</strain>
    </source>
</reference>
<accession>A0KN65</accession>
<name>GUAC_AERHH</name>